<keyword id="KW-0002">3D-structure</keyword>
<keyword id="KW-0007">Acetylation</keyword>
<keyword id="KW-0025">Alternative splicing</keyword>
<keyword id="KW-0963">Cytoplasm</keyword>
<keyword id="KW-0903">Direct protein sequencing</keyword>
<keyword id="KW-0378">Hydrolase</keyword>
<keyword id="KW-0597">Phosphoprotein</keyword>
<keyword id="KW-0904">Protein phosphatase</keyword>
<keyword id="KW-1267">Proteomics identification</keyword>
<keyword id="KW-1185">Reference proteome</keyword>
<dbReference type="EC" id="3.1.3.48" evidence="21"/>
<dbReference type="EC" id="3.1.3.2" evidence="19 20"/>
<dbReference type="EMBL" id="M83653">
    <property type="protein sequence ID" value="AAB59354.1"/>
    <property type="molecule type" value="mRNA"/>
</dbReference>
<dbReference type="EMBL" id="M83654">
    <property type="protein sequence ID" value="AAB59355.1"/>
    <property type="molecule type" value="mRNA"/>
</dbReference>
<dbReference type="EMBL" id="U25849">
    <property type="protein sequence ID" value="AAC52067.1"/>
    <property type="molecule type" value="Genomic_DNA"/>
</dbReference>
<dbReference type="EMBL" id="U25847">
    <property type="protein sequence ID" value="AAC52067.1"/>
    <property type="status" value="JOINED"/>
    <property type="molecule type" value="Genomic_DNA"/>
</dbReference>
<dbReference type="EMBL" id="U25848">
    <property type="protein sequence ID" value="AAC52067.1"/>
    <property type="status" value="JOINED"/>
    <property type="molecule type" value="Genomic_DNA"/>
</dbReference>
<dbReference type="EMBL" id="S62884">
    <property type="protein sequence ID" value="AAB27085.1"/>
    <property type="molecule type" value="mRNA"/>
</dbReference>
<dbReference type="EMBL" id="S62885">
    <property type="protein sequence ID" value="AAB27086.1"/>
    <property type="molecule type" value="mRNA"/>
</dbReference>
<dbReference type="EMBL" id="M87545">
    <property type="status" value="NOT_ANNOTATED_CDS"/>
    <property type="molecule type" value="mRNA"/>
</dbReference>
<dbReference type="EMBL" id="BT007136">
    <property type="protein sequence ID" value="AAP35800.1"/>
    <property type="molecule type" value="mRNA"/>
</dbReference>
<dbReference type="EMBL" id="AK289934">
    <property type="protein sequence ID" value="BAF82623.1"/>
    <property type="molecule type" value="mRNA"/>
</dbReference>
<dbReference type="EMBL" id="AK291861">
    <property type="protein sequence ID" value="BAF84550.1"/>
    <property type="molecule type" value="mRNA"/>
</dbReference>
<dbReference type="EMBL" id="BP363227">
    <property type="status" value="NOT_ANNOTATED_CDS"/>
    <property type="molecule type" value="mRNA"/>
</dbReference>
<dbReference type="EMBL" id="AC079779">
    <property type="protein sequence ID" value="AAY14958.1"/>
    <property type="molecule type" value="Genomic_DNA"/>
</dbReference>
<dbReference type="EMBL" id="CH471053">
    <property type="protein sequence ID" value="EAX01112.1"/>
    <property type="molecule type" value="Genomic_DNA"/>
</dbReference>
<dbReference type="EMBL" id="CH471053">
    <property type="protein sequence ID" value="EAX01116.1"/>
    <property type="molecule type" value="Genomic_DNA"/>
</dbReference>
<dbReference type="EMBL" id="BC007422">
    <property type="protein sequence ID" value="AAH07422.1"/>
    <property type="molecule type" value="mRNA"/>
</dbReference>
<dbReference type="EMBL" id="BC106011">
    <property type="protein sequence ID" value="AAI06012.1"/>
    <property type="molecule type" value="mRNA"/>
</dbReference>
<dbReference type="EMBL" id="L06508">
    <property type="protein sequence ID" value="AAB59628.1"/>
    <property type="molecule type" value="Genomic_DNA"/>
</dbReference>
<dbReference type="CCDS" id="CCDS1639.1">
    <molecule id="P24666-1"/>
</dbReference>
<dbReference type="CCDS" id="CCDS1640.1">
    <molecule id="P24666-2"/>
</dbReference>
<dbReference type="CCDS" id="CCDS46217.1">
    <molecule id="P24666-4"/>
</dbReference>
<dbReference type="PIR" id="A38148">
    <property type="entry name" value="A38148"/>
</dbReference>
<dbReference type="PIR" id="B38148">
    <property type="entry name" value="B38148"/>
</dbReference>
<dbReference type="RefSeq" id="NP_001035739.1">
    <molecule id="P24666-4"/>
    <property type="nucleotide sequence ID" value="NM_001040649.3"/>
</dbReference>
<dbReference type="RefSeq" id="NP_004291.1">
    <molecule id="P24666-1"/>
    <property type="nucleotide sequence ID" value="NM_004300.4"/>
</dbReference>
<dbReference type="RefSeq" id="NP_009030.1">
    <molecule id="P24666-2"/>
    <property type="nucleotide sequence ID" value="NM_007099.4"/>
</dbReference>
<dbReference type="PDB" id="1XWW">
    <property type="method" value="X-ray"/>
    <property type="resolution" value="1.63 A"/>
    <property type="chains" value="A=2-158"/>
</dbReference>
<dbReference type="PDB" id="3N8I">
    <property type="method" value="X-ray"/>
    <property type="resolution" value="1.50 A"/>
    <property type="chains" value="A=2-158"/>
</dbReference>
<dbReference type="PDB" id="4Z99">
    <property type="method" value="X-ray"/>
    <property type="resolution" value="2.30 A"/>
    <property type="chains" value="A=1-158"/>
</dbReference>
<dbReference type="PDB" id="4Z9A">
    <property type="method" value="X-ray"/>
    <property type="resolution" value="2.10 A"/>
    <property type="chains" value="A=1-158"/>
</dbReference>
<dbReference type="PDB" id="4Z9B">
    <property type="method" value="X-ray"/>
    <property type="resolution" value="2.41 A"/>
    <property type="chains" value="A=1-158"/>
</dbReference>
<dbReference type="PDB" id="5JNR">
    <property type="method" value="X-ray"/>
    <property type="resolution" value="2.00 A"/>
    <property type="chains" value="A=1-158"/>
</dbReference>
<dbReference type="PDB" id="5JNS">
    <property type="method" value="X-ray"/>
    <property type="resolution" value="1.80 A"/>
    <property type="chains" value="A=1-158"/>
</dbReference>
<dbReference type="PDB" id="5JNT">
    <property type="method" value="X-ray"/>
    <property type="resolution" value="1.45 A"/>
    <property type="chains" value="A=1-158"/>
</dbReference>
<dbReference type="PDB" id="5KQG">
    <property type="method" value="X-ray"/>
    <property type="resolution" value="1.50 A"/>
    <property type="chains" value="A=1-158"/>
</dbReference>
<dbReference type="PDB" id="5KQL">
    <property type="method" value="X-ray"/>
    <property type="resolution" value="1.45 A"/>
    <property type="chains" value="A=1-158"/>
</dbReference>
<dbReference type="PDB" id="5KQM">
    <property type="method" value="X-ray"/>
    <property type="resolution" value="1.91 A"/>
    <property type="chains" value="A=1-158"/>
</dbReference>
<dbReference type="PDB" id="5KQP">
    <property type="method" value="X-ray"/>
    <property type="resolution" value="2.05 A"/>
    <property type="chains" value="A=1-158"/>
</dbReference>
<dbReference type="PDB" id="5PNT">
    <property type="method" value="X-ray"/>
    <property type="resolution" value="2.20 A"/>
    <property type="chains" value="A=2-158"/>
</dbReference>
<dbReference type="PDB" id="6Y2V">
    <property type="method" value="X-ray"/>
    <property type="resolution" value="2.00 A"/>
    <property type="chains" value="A=1-158"/>
</dbReference>
<dbReference type="PDB" id="6Y2W">
    <property type="method" value="X-ray"/>
    <property type="resolution" value="1.77 A"/>
    <property type="chains" value="A=2-158"/>
</dbReference>
<dbReference type="PDB" id="7KH8">
    <property type="method" value="X-ray"/>
    <property type="resolution" value="1.30 A"/>
    <property type="chains" value="A/B=5-158"/>
</dbReference>
<dbReference type="PDB" id="7UW6">
    <property type="method" value="X-ray"/>
    <property type="resolution" value="1.50 A"/>
    <property type="chains" value="A=2-158"/>
</dbReference>
<dbReference type="PDBsum" id="1XWW"/>
<dbReference type="PDBsum" id="3N8I"/>
<dbReference type="PDBsum" id="4Z99"/>
<dbReference type="PDBsum" id="4Z9A"/>
<dbReference type="PDBsum" id="4Z9B"/>
<dbReference type="PDBsum" id="5JNR"/>
<dbReference type="PDBsum" id="5JNS"/>
<dbReference type="PDBsum" id="5JNT"/>
<dbReference type="PDBsum" id="5KQG"/>
<dbReference type="PDBsum" id="5KQL"/>
<dbReference type="PDBsum" id="5KQM"/>
<dbReference type="PDBsum" id="5KQP"/>
<dbReference type="PDBsum" id="5PNT"/>
<dbReference type="PDBsum" id="6Y2V"/>
<dbReference type="PDBsum" id="6Y2W"/>
<dbReference type="PDBsum" id="7KH8"/>
<dbReference type="PDBsum" id="7UW6"/>
<dbReference type="BMRB" id="P24666"/>
<dbReference type="SMR" id="P24666"/>
<dbReference type="BioGRID" id="106568">
    <property type="interactions" value="120"/>
</dbReference>
<dbReference type="FunCoup" id="P24666">
    <property type="interactions" value="1025"/>
</dbReference>
<dbReference type="IntAct" id="P24666">
    <property type="interactions" value="31"/>
</dbReference>
<dbReference type="MINT" id="P24666"/>
<dbReference type="STRING" id="9606.ENSP00000272067"/>
<dbReference type="BindingDB" id="P24666"/>
<dbReference type="ChEMBL" id="CHEMBL4903"/>
<dbReference type="DrugBank" id="DB04214">
    <property type="generic name" value="4-Nitrophenyl Phosphate"/>
</dbReference>
<dbReference type="DrugBank" id="DB00173">
    <property type="generic name" value="Adenine"/>
</dbReference>
<dbReference type="DrugCentral" id="P24666"/>
<dbReference type="DEPOD" id="ACP1"/>
<dbReference type="GlyGen" id="P24666">
    <property type="glycosylation" value="1 site, 1 O-linked glycan (1 site)"/>
</dbReference>
<dbReference type="iPTMnet" id="P24666"/>
<dbReference type="MetOSite" id="P24666"/>
<dbReference type="PhosphoSitePlus" id="P24666"/>
<dbReference type="SwissPalm" id="P24666"/>
<dbReference type="BioMuta" id="ACP1"/>
<dbReference type="DMDM" id="1709543"/>
<dbReference type="REPRODUCTION-2DPAGE" id="IPI00218847"/>
<dbReference type="REPRODUCTION-2DPAGE" id="IPI00219861"/>
<dbReference type="jPOST" id="P24666"/>
<dbReference type="MassIVE" id="P24666"/>
<dbReference type="PeptideAtlas" id="P24666"/>
<dbReference type="ProteomicsDB" id="54220">
    <molecule id="P24666-1"/>
</dbReference>
<dbReference type="ProteomicsDB" id="54221">
    <molecule id="P24666-2"/>
</dbReference>
<dbReference type="ProteomicsDB" id="54222">
    <molecule id="P24666-3"/>
</dbReference>
<dbReference type="ProteomicsDB" id="6027"/>
<dbReference type="Pumba" id="P24666"/>
<dbReference type="Antibodypedia" id="12168">
    <property type="antibodies" value="411 antibodies from 34 providers"/>
</dbReference>
<dbReference type="DNASU" id="52"/>
<dbReference type="Ensembl" id="ENST00000272065.10">
    <molecule id="P24666-1"/>
    <property type="protein sequence ID" value="ENSP00000272065.5"/>
    <property type="gene ID" value="ENSG00000143727.16"/>
</dbReference>
<dbReference type="Ensembl" id="ENST00000272067.11">
    <molecule id="P24666-2"/>
    <property type="protein sequence ID" value="ENSP00000272067.6"/>
    <property type="gene ID" value="ENSG00000143727.16"/>
</dbReference>
<dbReference type="Ensembl" id="ENST00000407983.7">
    <molecule id="P24666-4"/>
    <property type="protein sequence ID" value="ENSP00000385404.3"/>
    <property type="gene ID" value="ENSG00000143727.16"/>
</dbReference>
<dbReference type="GeneID" id="52"/>
<dbReference type="KEGG" id="hsa:52"/>
<dbReference type="MANE-Select" id="ENST00000272065.10">
    <property type="protein sequence ID" value="ENSP00000272065.5"/>
    <property type="RefSeq nucleotide sequence ID" value="NM_004300.4"/>
    <property type="RefSeq protein sequence ID" value="NP_004291.1"/>
</dbReference>
<dbReference type="UCSC" id="uc002qwd.3">
    <molecule id="P24666-1"/>
    <property type="organism name" value="human"/>
</dbReference>
<dbReference type="AGR" id="HGNC:122"/>
<dbReference type="CTD" id="52"/>
<dbReference type="DisGeNET" id="52"/>
<dbReference type="GeneCards" id="ACP1"/>
<dbReference type="HGNC" id="HGNC:122">
    <property type="gene designation" value="ACP1"/>
</dbReference>
<dbReference type="HPA" id="ENSG00000143727">
    <property type="expression patterns" value="Low tissue specificity"/>
</dbReference>
<dbReference type="MIM" id="171500">
    <property type="type" value="gene"/>
</dbReference>
<dbReference type="neXtProt" id="NX_P24666"/>
<dbReference type="OpenTargets" id="ENSG00000143727"/>
<dbReference type="PharmGKB" id="PA24446"/>
<dbReference type="VEuPathDB" id="HostDB:ENSG00000143727"/>
<dbReference type="GeneTree" id="ENSGT00940000158351"/>
<dbReference type="HOGENOM" id="CLU_071415_2_0_1"/>
<dbReference type="InParanoid" id="P24666"/>
<dbReference type="OMA" id="YQQVTRF"/>
<dbReference type="OrthoDB" id="3388at2759"/>
<dbReference type="PAN-GO" id="P24666">
    <property type="GO annotations" value="1 GO annotation based on evolutionary models"/>
</dbReference>
<dbReference type="PhylomeDB" id="P24666"/>
<dbReference type="TreeFam" id="TF353727"/>
<dbReference type="BRENDA" id="3.1.3.48">
    <property type="organism ID" value="2681"/>
</dbReference>
<dbReference type="PathwayCommons" id="P24666"/>
<dbReference type="SignaLink" id="P24666"/>
<dbReference type="SIGNOR" id="P24666"/>
<dbReference type="BioGRID-ORCS" id="52">
    <property type="hits" value="15 hits in 1166 CRISPR screens"/>
</dbReference>
<dbReference type="CD-CODE" id="FB4E32DD">
    <property type="entry name" value="Presynaptic clusters and postsynaptic densities"/>
</dbReference>
<dbReference type="ChiTaRS" id="ACP1">
    <property type="organism name" value="human"/>
</dbReference>
<dbReference type="EvolutionaryTrace" id="P24666"/>
<dbReference type="GeneWiki" id="ACP1"/>
<dbReference type="GenomeRNAi" id="52"/>
<dbReference type="Pharos" id="P24666">
    <property type="development level" value="Tchem"/>
</dbReference>
<dbReference type="PRO" id="PR:P24666"/>
<dbReference type="Proteomes" id="UP000005640">
    <property type="component" value="Chromosome 2"/>
</dbReference>
<dbReference type="RNAct" id="P24666">
    <property type="molecule type" value="protein"/>
</dbReference>
<dbReference type="Bgee" id="ENSG00000143727">
    <property type="expression patterns" value="Expressed in sperm and 202 other cell types or tissues"/>
</dbReference>
<dbReference type="ExpressionAtlas" id="P24666">
    <property type="expression patterns" value="baseline and differential"/>
</dbReference>
<dbReference type="GO" id="GO:0005737">
    <property type="term" value="C:cytoplasm"/>
    <property type="evidence" value="ECO:0000314"/>
    <property type="project" value="UniProtKB"/>
</dbReference>
<dbReference type="GO" id="GO:0009898">
    <property type="term" value="C:cytoplasmic side of plasma membrane"/>
    <property type="evidence" value="ECO:0000314"/>
    <property type="project" value="UniProtKB"/>
</dbReference>
<dbReference type="GO" id="GO:0005829">
    <property type="term" value="C:cytosol"/>
    <property type="evidence" value="ECO:0007669"/>
    <property type="project" value="Ensembl"/>
</dbReference>
<dbReference type="GO" id="GO:0070062">
    <property type="term" value="C:extracellular exosome"/>
    <property type="evidence" value="ECO:0007005"/>
    <property type="project" value="UniProtKB"/>
</dbReference>
<dbReference type="GO" id="GO:0042383">
    <property type="term" value="C:sarcolemma"/>
    <property type="evidence" value="ECO:0007669"/>
    <property type="project" value="Ensembl"/>
</dbReference>
<dbReference type="GO" id="GO:0045202">
    <property type="term" value="C:synapse"/>
    <property type="evidence" value="ECO:0007669"/>
    <property type="project" value="GOC"/>
</dbReference>
<dbReference type="GO" id="GO:0003993">
    <property type="term" value="F:acid phosphatase activity"/>
    <property type="evidence" value="ECO:0000314"/>
    <property type="project" value="UniProtKB"/>
</dbReference>
<dbReference type="GO" id="GO:0004726">
    <property type="term" value="F:non-membrane spanning protein tyrosine phosphatase activity"/>
    <property type="evidence" value="ECO:0007669"/>
    <property type="project" value="InterPro"/>
</dbReference>
<dbReference type="GO" id="GO:0004725">
    <property type="term" value="F:protein tyrosine phosphatase activity"/>
    <property type="evidence" value="ECO:0000314"/>
    <property type="project" value="UniProtKB"/>
</dbReference>
<dbReference type="GO" id="GO:0017124">
    <property type="term" value="F:SH3 domain binding"/>
    <property type="evidence" value="ECO:0007669"/>
    <property type="project" value="Ensembl"/>
</dbReference>
<dbReference type="GO" id="GO:0007268">
    <property type="term" value="P:chemical synaptic transmission"/>
    <property type="evidence" value="ECO:0007669"/>
    <property type="project" value="Ensembl"/>
</dbReference>
<dbReference type="CDD" id="cd16343">
    <property type="entry name" value="LMWPTP"/>
    <property type="match status" value="1"/>
</dbReference>
<dbReference type="FunFam" id="3.40.50.2300:FF:000105">
    <property type="entry name" value="Low molecular weight phosphotyrosine protein"/>
    <property type="match status" value="1"/>
</dbReference>
<dbReference type="Gene3D" id="3.40.50.2300">
    <property type="match status" value="1"/>
</dbReference>
<dbReference type="InterPro" id="IPR050438">
    <property type="entry name" value="LMW_PTPase"/>
</dbReference>
<dbReference type="InterPro" id="IPR023485">
    <property type="entry name" value="Ptyr_pPase"/>
</dbReference>
<dbReference type="InterPro" id="IPR036196">
    <property type="entry name" value="Ptyr_pPase_sf"/>
</dbReference>
<dbReference type="InterPro" id="IPR002115">
    <property type="entry name" value="Tyr_Pase_low_mol_wt_mml"/>
</dbReference>
<dbReference type="InterPro" id="IPR017867">
    <property type="entry name" value="Tyr_phospatase_low_mol_wt"/>
</dbReference>
<dbReference type="PANTHER" id="PTHR11717:SF34">
    <property type="entry name" value="LOW MOLECULAR WEIGHT PHOSPHOTYROSINE PROTEIN PHOSPHATASE"/>
    <property type="match status" value="1"/>
</dbReference>
<dbReference type="PANTHER" id="PTHR11717">
    <property type="entry name" value="LOW MOLECULAR WEIGHT PROTEIN TYROSINE PHOSPHATASE"/>
    <property type="match status" value="1"/>
</dbReference>
<dbReference type="Pfam" id="PF01451">
    <property type="entry name" value="LMWPc"/>
    <property type="match status" value="1"/>
</dbReference>
<dbReference type="PRINTS" id="PR00719">
    <property type="entry name" value="LMWPTPASE"/>
</dbReference>
<dbReference type="PRINTS" id="PR00720">
    <property type="entry name" value="MAMMALPTPASE"/>
</dbReference>
<dbReference type="SMART" id="SM00226">
    <property type="entry name" value="LMWPc"/>
    <property type="match status" value="1"/>
</dbReference>
<dbReference type="SUPFAM" id="SSF52788">
    <property type="entry name" value="Phosphotyrosine protein phosphatases I"/>
    <property type="match status" value="1"/>
</dbReference>
<proteinExistence type="evidence at protein level"/>
<reference key="1">
    <citation type="journal article" date="1991" name="J. Biol. Chem.">
        <title>Human red cell acid phosphatase (ACP1). The amino acid sequence of the two isozymes Bf and Bs encoded by the ACP1*B allele.</title>
        <authorList>
            <person name="Dissing J."/>
            <person name="Johnsen A.H."/>
            <person name="Sensabaugh G.F."/>
        </authorList>
    </citation>
    <scope>PROTEIN SEQUENCE (ALLELE B; ISOFORMS 1 AND 2)</scope>
    <scope>CLEAVAGE OF INITIATOR METHIONINE</scope>
    <scope>ACETYLATION AT ALA-2</scope>
</reference>
<reference key="2">
    <citation type="journal article" date="1992" name="Biochim. Biophys. Acta">
        <title>Human red cell acid phosphatase (ACP1): the primary structure of the two pairs of isozymes encoded by the ACP1*A and ACP1*C alleles.</title>
        <authorList>
            <person name="Dissing J."/>
            <person name="Johnsen A.H."/>
        </authorList>
    </citation>
    <scope>PROTEIN SEQUENCE (ALLELES A AND C; ISOFORMS 1 AND 2)</scope>
</reference>
<reference key="3">
    <citation type="journal article" date="1992" name="J. Biol. Chem.">
        <title>Sequencing, cloning, and expression of human red cell-type acid phosphatase, a cytoplasmic phosphotyrosyl protein phosphatase.</title>
        <authorList>
            <person name="Wo Y.-Y.P."/>
            <person name="McCormack A.L."/>
            <person name="Shabonowitz J."/>
            <person name="Hunt D.F."/>
            <person name="Davis J.P."/>
            <person name="Mitchell G.L."/>
            <person name="van Etten R.L."/>
        </authorList>
    </citation>
    <scope>NUCLEOTIDE SEQUENCE [MRNA] (ISOFORMS 1 AND 2)</scope>
</reference>
<reference key="4">
    <citation type="journal article" date="1995" name="Genomics">
        <title>Gene structure, sequence, and chromosomal localization of the human red cell-type low-molecular-weight acid phosphotyrosyl phosphatase gene, ACP1.</title>
        <authorList>
            <person name="Bryson G.L.M."/>
            <person name="Massa H."/>
            <person name="Trask B.J."/>
            <person name="van Etten R.L."/>
        </authorList>
    </citation>
    <scope>NUCLEOTIDE SEQUENCE [GENOMIC DNA]</scope>
</reference>
<reference key="5">
    <citation type="journal article" date="1992" name="Protein Sci.">
        <title>Identification of the adipocyte acid phosphatase as a PAO-sensitive tyrosyl phosphatase.</title>
        <authorList>
            <person name="Shekels L.L."/>
            <person name="Smith A.J."/>
            <person name="van Etten R.L."/>
            <person name="Bernlohr D.A."/>
        </authorList>
    </citation>
    <scope>NUCLEOTIDE SEQUENCE [MRNA] (ISOFORMS 1 AND 2)</scope>
    <source>
        <tissue>Adipocyte</tissue>
    </source>
</reference>
<reference key="6">
    <citation type="journal article" date="1997" name="J. Biol. Chem.">
        <title>Regulation of the low molecular weight phosphotyrosine phosphatase by phosphorylation at tyrosines 131 and 132.</title>
        <authorList>
            <person name="Tailor P."/>
            <person name="Gilman J."/>
            <person name="Williams S."/>
            <person name="Couture C."/>
            <person name="Mustelin T."/>
        </authorList>
    </citation>
    <scope>NUCLEOTIDE SEQUENCE (ISOFORM 2)</scope>
    <scope>TISSUE SPECIFICITY</scope>
    <scope>PHOSPHORYLATION AT TYR-132 AND TYR-133</scope>
    <scope>MUTAGENESIS OF CYS-13; TYR-132 AND TYR-133</scope>
    <scope>CATALYTIC ACTIVITY</scope>
</reference>
<reference key="7">
    <citation type="journal article" date="1999" name="Eur. J. Biochem.">
        <title>A novel isoform of the low molecular weight phosphotyrosine phosphatase, LMPTP-C, arising from alternative mRNA splicing.</title>
        <authorList>
            <person name="Tailor P."/>
            <person name="Gilman J."/>
            <person name="Williams S."/>
            <person name="Mustelin T."/>
        </authorList>
    </citation>
    <scope>NUCLEOTIDE SEQUENCE (ISOFORM 3)</scope>
    <scope>FUNCTION (ISOFORM 3)</scope>
    <scope>CATALYTIC ACTIVITY</scope>
    <scope>FUNCTION</scope>
</reference>
<reference key="8">
    <citation type="submission" date="2003-05" db="EMBL/GenBank/DDBJ databases">
        <title>Cloning of human full-length CDSs in BD Creator(TM) system donor vector.</title>
        <authorList>
            <person name="Kalnine N."/>
            <person name="Chen X."/>
            <person name="Rolfs A."/>
            <person name="Halleck A."/>
            <person name="Hines L."/>
            <person name="Eisenstein S."/>
            <person name="Koundinya M."/>
            <person name="Raphael J."/>
            <person name="Moreira D."/>
            <person name="Kelley T."/>
            <person name="LaBaer J."/>
            <person name="Lin Y."/>
            <person name="Phelan M."/>
            <person name="Farmer A."/>
        </authorList>
    </citation>
    <scope>NUCLEOTIDE SEQUENCE [LARGE SCALE MRNA] (ISOFORM 2)</scope>
</reference>
<reference key="9">
    <citation type="journal article" date="2004" name="Nat. Genet.">
        <title>Complete sequencing and characterization of 21,243 full-length human cDNAs.</title>
        <authorList>
            <person name="Ota T."/>
            <person name="Suzuki Y."/>
            <person name="Nishikawa T."/>
            <person name="Otsuki T."/>
            <person name="Sugiyama T."/>
            <person name="Irie R."/>
            <person name="Wakamatsu A."/>
            <person name="Hayashi K."/>
            <person name="Sato H."/>
            <person name="Nagai K."/>
            <person name="Kimura K."/>
            <person name="Makita H."/>
            <person name="Sekine M."/>
            <person name="Obayashi M."/>
            <person name="Nishi T."/>
            <person name="Shibahara T."/>
            <person name="Tanaka T."/>
            <person name="Ishii S."/>
            <person name="Yamamoto J."/>
            <person name="Saito K."/>
            <person name="Kawai Y."/>
            <person name="Isono Y."/>
            <person name="Nakamura Y."/>
            <person name="Nagahari K."/>
            <person name="Murakami K."/>
            <person name="Yasuda T."/>
            <person name="Iwayanagi T."/>
            <person name="Wagatsuma M."/>
            <person name="Shiratori A."/>
            <person name="Sudo H."/>
            <person name="Hosoiri T."/>
            <person name="Kaku Y."/>
            <person name="Kodaira H."/>
            <person name="Kondo H."/>
            <person name="Sugawara M."/>
            <person name="Takahashi M."/>
            <person name="Kanda K."/>
            <person name="Yokoi T."/>
            <person name="Furuya T."/>
            <person name="Kikkawa E."/>
            <person name="Omura Y."/>
            <person name="Abe K."/>
            <person name="Kamihara K."/>
            <person name="Katsuta N."/>
            <person name="Sato K."/>
            <person name="Tanikawa M."/>
            <person name="Yamazaki M."/>
            <person name="Ninomiya K."/>
            <person name="Ishibashi T."/>
            <person name="Yamashita H."/>
            <person name="Murakawa K."/>
            <person name="Fujimori K."/>
            <person name="Tanai H."/>
            <person name="Kimata M."/>
            <person name="Watanabe M."/>
            <person name="Hiraoka S."/>
            <person name="Chiba Y."/>
            <person name="Ishida S."/>
            <person name="Ono Y."/>
            <person name="Takiguchi S."/>
            <person name="Watanabe S."/>
            <person name="Yosida M."/>
            <person name="Hotuta T."/>
            <person name="Kusano J."/>
            <person name="Kanehori K."/>
            <person name="Takahashi-Fujii A."/>
            <person name="Hara H."/>
            <person name="Tanase T.-O."/>
            <person name="Nomura Y."/>
            <person name="Togiya S."/>
            <person name="Komai F."/>
            <person name="Hara R."/>
            <person name="Takeuchi K."/>
            <person name="Arita M."/>
            <person name="Imose N."/>
            <person name="Musashino K."/>
            <person name="Yuuki H."/>
            <person name="Oshima A."/>
            <person name="Sasaki N."/>
            <person name="Aotsuka S."/>
            <person name="Yoshikawa Y."/>
            <person name="Matsunawa H."/>
            <person name="Ichihara T."/>
            <person name="Shiohata N."/>
            <person name="Sano S."/>
            <person name="Moriya S."/>
            <person name="Momiyama H."/>
            <person name="Satoh N."/>
            <person name="Takami S."/>
            <person name="Terashima Y."/>
            <person name="Suzuki O."/>
            <person name="Nakagawa S."/>
            <person name="Senoh A."/>
            <person name="Mizoguchi H."/>
            <person name="Goto Y."/>
            <person name="Shimizu F."/>
            <person name="Wakebe H."/>
            <person name="Hishigaki H."/>
            <person name="Watanabe T."/>
            <person name="Sugiyama A."/>
            <person name="Takemoto M."/>
            <person name="Kawakami B."/>
            <person name="Yamazaki M."/>
            <person name="Watanabe K."/>
            <person name="Kumagai A."/>
            <person name="Itakura S."/>
            <person name="Fukuzumi Y."/>
            <person name="Fujimori Y."/>
            <person name="Komiyama M."/>
            <person name="Tashiro H."/>
            <person name="Tanigami A."/>
            <person name="Fujiwara T."/>
            <person name="Ono T."/>
            <person name="Yamada K."/>
            <person name="Fujii Y."/>
            <person name="Ozaki K."/>
            <person name="Hirao M."/>
            <person name="Ohmori Y."/>
            <person name="Kawabata A."/>
            <person name="Hikiji T."/>
            <person name="Kobatake N."/>
            <person name="Inagaki H."/>
            <person name="Ikema Y."/>
            <person name="Okamoto S."/>
            <person name="Okitani R."/>
            <person name="Kawakami T."/>
            <person name="Noguchi S."/>
            <person name="Itoh T."/>
            <person name="Shigeta K."/>
            <person name="Senba T."/>
            <person name="Matsumura K."/>
            <person name="Nakajima Y."/>
            <person name="Mizuno T."/>
            <person name="Morinaga M."/>
            <person name="Sasaki M."/>
            <person name="Togashi T."/>
            <person name="Oyama M."/>
            <person name="Hata H."/>
            <person name="Watanabe M."/>
            <person name="Komatsu T."/>
            <person name="Mizushima-Sugano J."/>
            <person name="Satoh T."/>
            <person name="Shirai Y."/>
            <person name="Takahashi Y."/>
            <person name="Nakagawa K."/>
            <person name="Okumura K."/>
            <person name="Nagase T."/>
            <person name="Nomura N."/>
            <person name="Kikuchi H."/>
            <person name="Masuho Y."/>
            <person name="Yamashita R."/>
            <person name="Nakai K."/>
            <person name="Yada T."/>
            <person name="Nakamura Y."/>
            <person name="Ohara O."/>
            <person name="Isogai T."/>
            <person name="Sugano S."/>
        </authorList>
    </citation>
    <scope>NUCLEOTIDE SEQUENCE [LARGE SCALE MRNA] (ISOFORMS 1 AND 2)</scope>
    <source>
        <tissue>Hippocampus</tissue>
        <tissue>Skeletal muscle</tissue>
    </source>
</reference>
<reference key="10">
    <citation type="journal article" date="2006" name="Genome Res.">
        <title>Diversification of transcriptional modulation: large-scale identification and characterization of putative alternative promoters of human genes.</title>
        <authorList>
            <person name="Kimura K."/>
            <person name="Wakamatsu A."/>
            <person name="Suzuki Y."/>
            <person name="Ota T."/>
            <person name="Nishikawa T."/>
            <person name="Yamashita R."/>
            <person name="Yamamoto J."/>
            <person name="Sekine M."/>
            <person name="Tsuritani K."/>
            <person name="Wakaguri H."/>
            <person name="Ishii S."/>
            <person name="Sugiyama T."/>
            <person name="Saito K."/>
            <person name="Isono Y."/>
            <person name="Irie R."/>
            <person name="Kushida N."/>
            <person name="Yoneyama T."/>
            <person name="Otsuka R."/>
            <person name="Kanda K."/>
            <person name="Yokoi T."/>
            <person name="Kondo H."/>
            <person name="Wagatsuma M."/>
            <person name="Murakawa K."/>
            <person name="Ishida S."/>
            <person name="Ishibashi T."/>
            <person name="Takahashi-Fujii A."/>
            <person name="Tanase T."/>
            <person name="Nagai K."/>
            <person name="Kikuchi H."/>
            <person name="Nakai K."/>
            <person name="Isogai T."/>
            <person name="Sugano S."/>
        </authorList>
    </citation>
    <scope>NUCLEOTIDE SEQUENCE [LARGE SCALE MRNA] (ISOFORM 4)</scope>
</reference>
<reference key="11">
    <citation type="journal article" date="2005" name="Nature">
        <title>Generation and annotation of the DNA sequences of human chromosomes 2 and 4.</title>
        <authorList>
            <person name="Hillier L.W."/>
            <person name="Graves T.A."/>
            <person name="Fulton R.S."/>
            <person name="Fulton L.A."/>
            <person name="Pepin K.H."/>
            <person name="Minx P."/>
            <person name="Wagner-McPherson C."/>
            <person name="Layman D."/>
            <person name="Wylie K."/>
            <person name="Sekhon M."/>
            <person name="Becker M.C."/>
            <person name="Fewell G.A."/>
            <person name="Delehaunty K.D."/>
            <person name="Miner T.L."/>
            <person name="Nash W.E."/>
            <person name="Kremitzki C."/>
            <person name="Oddy L."/>
            <person name="Du H."/>
            <person name="Sun H."/>
            <person name="Bradshaw-Cordum H."/>
            <person name="Ali J."/>
            <person name="Carter J."/>
            <person name="Cordes M."/>
            <person name="Harris A."/>
            <person name="Isak A."/>
            <person name="van Brunt A."/>
            <person name="Nguyen C."/>
            <person name="Du F."/>
            <person name="Courtney L."/>
            <person name="Kalicki J."/>
            <person name="Ozersky P."/>
            <person name="Abbott S."/>
            <person name="Armstrong J."/>
            <person name="Belter E.A."/>
            <person name="Caruso L."/>
            <person name="Cedroni M."/>
            <person name="Cotton M."/>
            <person name="Davidson T."/>
            <person name="Desai A."/>
            <person name="Elliott G."/>
            <person name="Erb T."/>
            <person name="Fronick C."/>
            <person name="Gaige T."/>
            <person name="Haakenson W."/>
            <person name="Haglund K."/>
            <person name="Holmes A."/>
            <person name="Harkins R."/>
            <person name="Kim K."/>
            <person name="Kruchowski S.S."/>
            <person name="Strong C.M."/>
            <person name="Grewal N."/>
            <person name="Goyea E."/>
            <person name="Hou S."/>
            <person name="Levy A."/>
            <person name="Martinka S."/>
            <person name="Mead K."/>
            <person name="McLellan M.D."/>
            <person name="Meyer R."/>
            <person name="Randall-Maher J."/>
            <person name="Tomlinson C."/>
            <person name="Dauphin-Kohlberg S."/>
            <person name="Kozlowicz-Reilly A."/>
            <person name="Shah N."/>
            <person name="Swearengen-Shahid S."/>
            <person name="Snider J."/>
            <person name="Strong J.T."/>
            <person name="Thompson J."/>
            <person name="Yoakum M."/>
            <person name="Leonard S."/>
            <person name="Pearman C."/>
            <person name="Trani L."/>
            <person name="Radionenko M."/>
            <person name="Waligorski J.E."/>
            <person name="Wang C."/>
            <person name="Rock S.M."/>
            <person name="Tin-Wollam A.-M."/>
            <person name="Maupin R."/>
            <person name="Latreille P."/>
            <person name="Wendl M.C."/>
            <person name="Yang S.-P."/>
            <person name="Pohl C."/>
            <person name="Wallis J.W."/>
            <person name="Spieth J."/>
            <person name="Bieri T.A."/>
            <person name="Berkowicz N."/>
            <person name="Nelson J.O."/>
            <person name="Osborne J."/>
            <person name="Ding L."/>
            <person name="Meyer R."/>
            <person name="Sabo A."/>
            <person name="Shotland Y."/>
            <person name="Sinha P."/>
            <person name="Wohldmann P.E."/>
            <person name="Cook L.L."/>
            <person name="Hickenbotham M.T."/>
            <person name="Eldred J."/>
            <person name="Williams D."/>
            <person name="Jones T.A."/>
            <person name="She X."/>
            <person name="Ciccarelli F.D."/>
            <person name="Izaurralde E."/>
            <person name="Taylor J."/>
            <person name="Schmutz J."/>
            <person name="Myers R.M."/>
            <person name="Cox D.R."/>
            <person name="Huang X."/>
            <person name="McPherson J.D."/>
            <person name="Mardis E.R."/>
            <person name="Clifton S.W."/>
            <person name="Warren W.C."/>
            <person name="Chinwalla A.T."/>
            <person name="Eddy S.R."/>
            <person name="Marra M.A."/>
            <person name="Ovcharenko I."/>
            <person name="Furey T.S."/>
            <person name="Miller W."/>
            <person name="Eichler E.E."/>
            <person name="Bork P."/>
            <person name="Suyama M."/>
            <person name="Torrents D."/>
            <person name="Waterston R.H."/>
            <person name="Wilson R.K."/>
        </authorList>
    </citation>
    <scope>NUCLEOTIDE SEQUENCE [LARGE SCALE GENOMIC DNA]</scope>
</reference>
<reference key="12">
    <citation type="submission" date="2005-09" db="EMBL/GenBank/DDBJ databases">
        <authorList>
            <person name="Mural R.J."/>
            <person name="Istrail S."/>
            <person name="Sutton G.G."/>
            <person name="Florea L."/>
            <person name="Halpern A.L."/>
            <person name="Mobarry C.M."/>
            <person name="Lippert R."/>
            <person name="Walenz B."/>
            <person name="Shatkay H."/>
            <person name="Dew I."/>
            <person name="Miller J.R."/>
            <person name="Flanigan M.J."/>
            <person name="Edwards N.J."/>
            <person name="Bolanos R."/>
            <person name="Fasulo D."/>
            <person name="Halldorsson B.V."/>
            <person name="Hannenhalli S."/>
            <person name="Turner R."/>
            <person name="Yooseph S."/>
            <person name="Lu F."/>
            <person name="Nusskern D.R."/>
            <person name="Shue B.C."/>
            <person name="Zheng X.H."/>
            <person name="Zhong F."/>
            <person name="Delcher A.L."/>
            <person name="Huson D.H."/>
            <person name="Kravitz S.A."/>
            <person name="Mouchard L."/>
            <person name="Reinert K."/>
            <person name="Remington K.A."/>
            <person name="Clark A.G."/>
            <person name="Waterman M.S."/>
            <person name="Eichler E.E."/>
            <person name="Adams M.D."/>
            <person name="Hunkapiller M.W."/>
            <person name="Myers E.W."/>
            <person name="Venter J.C."/>
        </authorList>
    </citation>
    <scope>NUCLEOTIDE SEQUENCE [LARGE SCALE GENOMIC DNA]</scope>
</reference>
<reference key="13">
    <citation type="journal article" date="2004" name="Genome Res.">
        <title>The status, quality, and expansion of the NIH full-length cDNA project: the Mammalian Gene Collection (MGC).</title>
        <authorList>
            <consortium name="The MGC Project Team"/>
        </authorList>
    </citation>
    <scope>NUCLEOTIDE SEQUENCE [LARGE SCALE MRNA] (ISOFORMS 1 AND 2)</scope>
    <scope>VARIANT ARG-106</scope>
    <source>
        <tissue>Muscle</tissue>
        <tissue>Placenta</tissue>
    </source>
</reference>
<reference key="14">
    <citation type="submission" date="2007-03" db="UniProtKB">
        <authorList>
            <person name="Lubec G."/>
            <person name="Vishwanath V."/>
        </authorList>
    </citation>
    <scope>PROTEIN SEQUENCE OF 42-59</scope>
    <scope>IDENTIFICATION BY MASS SPECTROMETRY</scope>
    <source>
        <tissue>Brain</tissue>
        <tissue>Cajal-Retzius cell</tissue>
    </source>
</reference>
<reference key="15">
    <citation type="journal article" date="1993" name="Hum. Mol. Genet.">
        <title>A TaqI site identifies the *A allele at the ACP1 locus.</title>
        <authorList>
            <person name="Sensabaugh G.F."/>
            <person name="Lazaruk K.A."/>
        </authorList>
    </citation>
    <scope>NUCLEOTIDE SEQUENCE [GENOMIC DNA] OF 99-158 (ISOFORMS 1/2)</scope>
    <source>
        <tissue>Blood</tissue>
    </source>
</reference>
<reference key="16">
    <citation type="journal article" date="1998" name="Genes Dev.">
        <title>Eph receptors discriminate specific ligand oligomers to determine alternative signaling complexes, attachment, and assembly responses.</title>
        <authorList>
            <person name="Stein E."/>
            <person name="Lane A.A."/>
            <person name="Cerretti D.P."/>
            <person name="Schoecklmann H.O."/>
            <person name="Schroff A.D."/>
            <person name="Van Etten R.L."/>
            <person name="Daniel T.O."/>
        </authorList>
    </citation>
    <scope>INTERACTION WITH EPHB1</scope>
</reference>
<reference key="17">
    <citation type="journal article" date="2002" name="J. Biol. Chem.">
        <title>Regulation of the EphA2 kinase by the low molecular weight tyrosine phosphatase induces transformation.</title>
        <authorList>
            <person name="Kikawa K.D."/>
            <person name="Vidale D.R."/>
            <person name="Van Etten R.L."/>
            <person name="Kinch M.S."/>
        </authorList>
    </citation>
    <scope>INTERACTION WITH EPHA2</scope>
</reference>
<reference key="18">
    <citation type="journal article" date="2002" name="Mol. Cell. Biol.">
        <title>Tyrosine phosphorylation regulates alpha II spectrin cleavage by calpain.</title>
        <authorList>
            <person name="Nicolas G."/>
            <person name="Fournier C.M."/>
            <person name="Galand C."/>
            <person name="Malbert-Colas L."/>
            <person name="Bournier O."/>
            <person name="Kroviarski Y."/>
            <person name="Bourgeois M."/>
            <person name="Camonis J.H."/>
            <person name="Dhermy D."/>
            <person name="Grandchamp B."/>
            <person name="Lecomte M.-C."/>
        </authorList>
    </citation>
    <scope>INTERACTION WITH SPTAN1</scope>
</reference>
<reference key="19">
    <citation type="journal article" date="2011" name="BMC Syst. Biol.">
        <title>Initial characterization of the human central proteome.</title>
        <authorList>
            <person name="Burkard T.R."/>
            <person name="Planyavsky M."/>
            <person name="Kaupe I."/>
            <person name="Breitwieser F.P."/>
            <person name="Buerckstuemmer T."/>
            <person name="Bennett K.L."/>
            <person name="Superti-Furga G."/>
            <person name="Colinge J."/>
        </authorList>
    </citation>
    <scope>IDENTIFICATION BY MASS SPECTROMETRY [LARGE SCALE ANALYSIS]</scope>
</reference>
<reference key="20">
    <citation type="journal article" date="2014" name="J. Proteomics">
        <title>An enzyme assisted RP-RPLC approach for in-depth analysis of human liver phosphoproteome.</title>
        <authorList>
            <person name="Bian Y."/>
            <person name="Song C."/>
            <person name="Cheng K."/>
            <person name="Dong M."/>
            <person name="Wang F."/>
            <person name="Huang J."/>
            <person name="Sun D."/>
            <person name="Wang L."/>
            <person name="Ye M."/>
            <person name="Zou H."/>
        </authorList>
    </citation>
    <scope>IDENTIFICATION BY MASS SPECTROMETRY [LARGE SCALE ANALYSIS]</scope>
    <source>
        <tissue>Liver</tissue>
    </source>
</reference>
<reference key="21">
    <citation type="journal article" date="2015" name="Proteomics">
        <title>N-terminome analysis of the human mitochondrial proteome.</title>
        <authorList>
            <person name="Vaca Jacome A.S."/>
            <person name="Rabilloud T."/>
            <person name="Schaeffer-Reiss C."/>
            <person name="Rompais M."/>
            <person name="Ayoub D."/>
            <person name="Lane L."/>
            <person name="Bairoch A."/>
            <person name="Van Dorsselaer A."/>
            <person name="Carapito C."/>
        </authorList>
    </citation>
    <scope>IDENTIFICATION BY MASS SPECTROMETRY [LARGE SCALE ANALYSIS]</scope>
</reference>
<reference key="22">
    <citation type="journal article" date="1998" name="J. Biol. Chem.">
        <title>Crystal structure of a human low molecular weight phosphotyrosyl phosphatase. Implications for substrate specificity.</title>
        <authorList>
            <person name="Zhang M."/>
            <person name="Stauffacher C.V."/>
            <person name="Lin D."/>
            <person name="van Etten R.L."/>
        </authorList>
    </citation>
    <scope>X-RAY CRYSTALLOGRAPHY (2.2 ANGSTROMS)</scope>
</reference>
<evidence type="ECO:0000250" key="1">
    <source>
        <dbReference type="UniProtKB" id="P11064"/>
    </source>
</evidence>
<evidence type="ECO:0000269" key="2">
    <source>
    </source>
</evidence>
<evidence type="ECO:0000269" key="3">
    <source>
    </source>
</evidence>
<evidence type="ECO:0000269" key="4">
    <source>
    </source>
</evidence>
<evidence type="ECO:0000269" key="5">
    <source>
    </source>
</evidence>
<evidence type="ECO:0000269" key="6">
    <source>
    </source>
</evidence>
<evidence type="ECO:0000269" key="7">
    <source>
    </source>
</evidence>
<evidence type="ECO:0000269" key="8">
    <source>
    </source>
</evidence>
<evidence type="ECO:0000269" key="9">
    <source>
    </source>
</evidence>
<evidence type="ECO:0000303" key="10">
    <source>
    </source>
</evidence>
<evidence type="ECO:0000303" key="11">
    <source>
    </source>
</evidence>
<evidence type="ECO:0000303" key="12">
    <source>
    </source>
</evidence>
<evidence type="ECO:0000303" key="13">
    <source>
    </source>
</evidence>
<evidence type="ECO:0000303" key="14">
    <source>
    </source>
</evidence>
<evidence type="ECO:0000303" key="15">
    <source>
    </source>
</evidence>
<evidence type="ECO:0000303" key="16">
    <source>
    </source>
</evidence>
<evidence type="ECO:0000303" key="17">
    <source ref="8"/>
</evidence>
<evidence type="ECO:0000305" key="18"/>
<evidence type="ECO:0000305" key="19">
    <source>
    </source>
</evidence>
<evidence type="ECO:0000305" key="20">
    <source>
    </source>
</evidence>
<evidence type="ECO:0000305" key="21">
    <source>
    </source>
</evidence>
<evidence type="ECO:0000312" key="22">
    <source>
        <dbReference type="HGNC" id="HGNC:122"/>
    </source>
</evidence>
<evidence type="ECO:0007829" key="23">
    <source>
        <dbReference type="PDB" id="7KH8"/>
    </source>
</evidence>
<feature type="initiator methionine" description="Removed" evidence="6">
    <location>
        <position position="1"/>
    </location>
</feature>
<feature type="chain" id="PRO_0000046558" description="Low molecular weight phosphotyrosine protein phosphatase">
    <location>
        <begin position="2"/>
        <end position="158"/>
    </location>
</feature>
<feature type="active site" description="Nucleophile" evidence="1">
    <location>
        <position position="13"/>
    </location>
</feature>
<feature type="active site" evidence="1">
    <location>
        <position position="19"/>
    </location>
</feature>
<feature type="active site" description="Proton donor" evidence="1">
    <location>
        <position position="130"/>
    </location>
</feature>
<feature type="modified residue" description="N-acetylalanine" evidence="6">
    <location>
        <position position="2"/>
    </location>
</feature>
<feature type="modified residue" description="Phosphotyrosine" evidence="7">
    <location>
        <position position="132"/>
    </location>
</feature>
<feature type="modified residue" description="Phosphotyrosine" evidence="7">
    <location>
        <position position="133"/>
    </location>
</feature>
<feature type="splice variant" id="VSP_010087" description="In isoform 2." evidence="11 12 13 14 17">
    <original>RVDSAATSGYEIGNPPDYRGQSCMKRHGIPMSHV</original>
    <variation>VIDSGAVSDWNVGRSPDPRAVSCLRNHGIHTAHK</variation>
    <location>
        <begin position="41"/>
        <end position="74"/>
    </location>
</feature>
<feature type="splice variant" id="VSP_010088" description="In isoform 3." evidence="18">
    <location>
        <begin position="41"/>
        <end position="74"/>
    </location>
</feature>
<feature type="splice variant" id="VSP_054074" description="In isoform 4." evidence="15">
    <original>ITKEDFATFDYILCMDESNLRDLNRKSNQVKTCKA</original>
    <variation>VPSLDLKLCVLCFSGSLTAVLFLTGTWAGPQTQEL</variation>
    <location>
        <begin position="78"/>
        <end position="112"/>
    </location>
</feature>
<feature type="splice variant" id="VSP_054075" description="In isoform 4." evidence="15">
    <location>
        <begin position="113"/>
        <end position="158"/>
    </location>
</feature>
<feature type="sequence variant" id="VAR_050526" description="In dbSNP:rs11691572.">
    <original>K</original>
    <variation>N</variation>
    <location>
        <position position="7"/>
    </location>
</feature>
<feature type="sequence variant" id="VAR_006171" description="In allele ACP1*A; dbSNP:rs79716074." evidence="5">
    <original>Q</original>
    <variation>R</variation>
    <location>
        <position position="106"/>
    </location>
</feature>
<feature type="sequence variant" id="VAR_050527" description="In dbSNP:rs35569198.">
    <original>S</original>
    <variation>F</variation>
    <location>
        <position position="137"/>
    </location>
</feature>
<feature type="mutagenesis site" description="Inactive." evidence="7">
    <original>C</original>
    <variation>S</variation>
    <location>
        <position position="13"/>
    </location>
</feature>
<feature type="mutagenesis site" description="Reduced phosphorylation and activity." evidence="7">
    <original>Y</original>
    <variation>F</variation>
    <location>
        <position position="132"/>
    </location>
</feature>
<feature type="mutagenesis site" description="Reduced phosphorylation. No effect on activity." evidence="7">
    <original>Y</original>
    <variation>F</variation>
    <location>
        <position position="133"/>
    </location>
</feature>
<feature type="sequence conflict" description="In Ref. 5; AAB27086." evidence="18" ref="5">
    <original>AEQAT</original>
    <variation>PRRGR</variation>
    <location>
        <begin position="2"/>
        <end position="6"/>
    </location>
</feature>
<feature type="sequence conflict" description="In Ref. 10; BP363227." evidence="18" ref="10">
    <original>A</original>
    <variation>P</variation>
    <location>
        <position position="2"/>
    </location>
</feature>
<feature type="sequence conflict" description="In Ref. 5; AAB27085." evidence="18" ref="5">
    <original>CLGNICRS</original>
    <variation>PARREAAR</variation>
    <location>
        <begin position="13"/>
        <end position="20"/>
    </location>
</feature>
<feature type="sequence conflict" description="In Ref. 1; AA sequence and 2; AA sequence." evidence="18" ref="1 2">
    <original>T</original>
    <variation>W</variation>
    <location>
        <position position="32"/>
    </location>
</feature>
<feature type="strand" evidence="23">
    <location>
        <begin position="7"/>
        <end position="18"/>
    </location>
</feature>
<feature type="helix" evidence="23">
    <location>
        <begin position="19"/>
        <end position="33"/>
    </location>
</feature>
<feature type="helix" evidence="23">
    <location>
        <begin position="37"/>
        <end position="39"/>
    </location>
</feature>
<feature type="strand" evidence="23">
    <location>
        <begin position="40"/>
        <end position="49"/>
    </location>
</feature>
<feature type="turn" evidence="23">
    <location>
        <begin position="50"/>
        <end position="53"/>
    </location>
</feature>
<feature type="helix" evidence="23">
    <location>
        <begin position="58"/>
        <end position="66"/>
    </location>
</feature>
<feature type="helix" evidence="23">
    <location>
        <begin position="80"/>
        <end position="85"/>
    </location>
</feature>
<feature type="strand" evidence="23">
    <location>
        <begin position="87"/>
        <end position="93"/>
    </location>
</feature>
<feature type="helix" evidence="23">
    <location>
        <begin position="94"/>
        <end position="104"/>
    </location>
</feature>
<feature type="strand" evidence="23">
    <location>
        <begin position="113"/>
        <end position="116"/>
    </location>
</feature>
<feature type="helix" evidence="23">
    <location>
        <begin position="117"/>
        <end position="120"/>
    </location>
</feature>
<feature type="helix" evidence="23">
    <location>
        <begin position="136"/>
        <end position="155"/>
    </location>
</feature>
<sequence length="158" mass="18042">MAEQATKSVLFVCLGNICRSPIAEAVFRKLVTDQNISENWRVDSAATSGYEIGNPPDYRGQSCMKRHGIPMSHVARQITKEDFATFDYILCMDESNLRDLNRKSNQVKTCKAKIELLGSYDPQKQLIIEDPYYGNDSDFETVYQQCVRCCRAFLEKAH</sequence>
<protein>
    <recommendedName>
        <fullName evidence="18">Low molecular weight phosphotyrosine protein phosphatase</fullName>
        <shortName>LMW-PTP</shortName>
        <shortName>LMW-PTPase</shortName>
        <ecNumber evidence="21">3.1.3.48</ecNumber>
    </recommendedName>
    <alternativeName>
        <fullName>Adipocyte acid phosphatase</fullName>
    </alternativeName>
    <alternativeName>
        <fullName>Low molecular weight cytosolic acid phosphatase</fullName>
        <ecNumber evidence="19 20">3.1.3.2</ecNumber>
    </alternativeName>
    <alternativeName>
        <fullName>Red cell acid phosphatase 1</fullName>
    </alternativeName>
</protein>
<name>PPAC_HUMAN</name>
<gene>
    <name evidence="22" type="primary">ACP1</name>
</gene>
<comment type="function">
    <text evidence="2 9">Acts on tyrosine phosphorylated proteins, low-MW aryl phosphates and natural and synthetic acyl phosphates with differences in substrate specificity between isoform 1 and isoform 2.</text>
</comment>
<comment type="function">
    <molecule>Isoform 3</molecule>
    <text evidence="2">Does not possess phosphatase activity.</text>
</comment>
<comment type="catalytic activity">
    <molecule>Isoform 1</molecule>
    <reaction evidence="21">
        <text>O-phospho-L-tyrosyl-[protein] + H2O = L-tyrosyl-[protein] + phosphate</text>
        <dbReference type="Rhea" id="RHEA:10684"/>
        <dbReference type="Rhea" id="RHEA-COMP:10136"/>
        <dbReference type="Rhea" id="RHEA-COMP:20101"/>
        <dbReference type="ChEBI" id="CHEBI:15377"/>
        <dbReference type="ChEBI" id="CHEBI:43474"/>
        <dbReference type="ChEBI" id="CHEBI:46858"/>
        <dbReference type="ChEBI" id="CHEBI:61978"/>
        <dbReference type="EC" id="3.1.3.48"/>
    </reaction>
    <physiologicalReaction direction="left-to-right" evidence="21">
        <dbReference type="Rhea" id="RHEA:10685"/>
    </physiologicalReaction>
</comment>
<comment type="catalytic activity">
    <molecule>Isoform 2</molecule>
    <reaction evidence="21">
        <text>O-phospho-L-tyrosyl-[protein] + H2O = L-tyrosyl-[protein] + phosphate</text>
        <dbReference type="Rhea" id="RHEA:10684"/>
        <dbReference type="Rhea" id="RHEA-COMP:10136"/>
        <dbReference type="Rhea" id="RHEA-COMP:20101"/>
        <dbReference type="ChEBI" id="CHEBI:15377"/>
        <dbReference type="ChEBI" id="CHEBI:43474"/>
        <dbReference type="ChEBI" id="CHEBI:46858"/>
        <dbReference type="ChEBI" id="CHEBI:61978"/>
        <dbReference type="EC" id="3.1.3.48"/>
    </reaction>
    <physiologicalReaction direction="left-to-right" evidence="21">
        <dbReference type="Rhea" id="RHEA:10685"/>
    </physiologicalReaction>
</comment>
<comment type="catalytic activity">
    <molecule>Isoform 1</molecule>
    <reaction evidence="19 21">
        <text>a phosphate monoester + H2O = an alcohol + phosphate</text>
        <dbReference type="Rhea" id="RHEA:15017"/>
        <dbReference type="ChEBI" id="CHEBI:15377"/>
        <dbReference type="ChEBI" id="CHEBI:30879"/>
        <dbReference type="ChEBI" id="CHEBI:43474"/>
        <dbReference type="ChEBI" id="CHEBI:67140"/>
        <dbReference type="EC" id="3.1.3.2"/>
    </reaction>
    <physiologicalReaction direction="left-to-right" evidence="19 21">
        <dbReference type="Rhea" id="RHEA:15018"/>
    </physiologicalReaction>
</comment>
<comment type="catalytic activity">
    <molecule>Isoform 2</molecule>
    <reaction evidence="19 20 21">
        <text>a phosphate monoester + H2O = an alcohol + phosphate</text>
        <dbReference type="Rhea" id="RHEA:15017"/>
        <dbReference type="ChEBI" id="CHEBI:15377"/>
        <dbReference type="ChEBI" id="CHEBI:30879"/>
        <dbReference type="ChEBI" id="CHEBI:43474"/>
        <dbReference type="ChEBI" id="CHEBI:67140"/>
        <dbReference type="EC" id="3.1.3.2"/>
    </reaction>
    <physiologicalReaction direction="left-to-right" evidence="19 20 21">
        <dbReference type="Rhea" id="RHEA:15018"/>
    </physiologicalReaction>
</comment>
<comment type="activity regulation">
    <text>Inhibited by sulfhydryl reagents.</text>
</comment>
<comment type="subunit">
    <text evidence="4 8">Interacts with EPHA2; dephosphorylates EPHA2. Interacts with EPHB1.</text>
</comment>
<comment type="subunit">
    <molecule>Isoform 1</molecule>
    <text evidence="3">Interacts with the SH3 domain of SPTAN1. There is no interaction observed for isoforms 2 or 3.</text>
</comment>
<comment type="interaction">
    <interactant intactId="EBI-25910301">
        <id>P24666-2</id>
    </interactant>
    <interactant intactId="EBI-748974">
        <id>Q96CV9</id>
        <label>OPTN</label>
    </interactant>
    <organismsDiffer>false</organismsDiffer>
    <experiments>3</experiments>
</comment>
<comment type="subcellular location">
    <subcellularLocation>
        <location>Cytoplasm</location>
    </subcellularLocation>
</comment>
<comment type="alternative products">
    <event type="alternative splicing"/>
    <isoform>
        <id>P24666-1</id>
        <name>1</name>
        <name>F</name>
        <name>A</name>
        <name>Alpha</name>
        <name evidence="10">LMPTP-A</name>
        <name evidence="16">HCPTP-A</name>
        <sequence type="displayed"/>
    </isoform>
    <isoform>
        <id>P24666-2</id>
        <id>P24667-1</id>
        <name>2</name>
        <name>S</name>
        <name>B</name>
        <name>Beta</name>
        <name evidence="10">LMPTP-B</name>
        <name evidence="16">HCPTP-B</name>
        <sequence type="described" ref="VSP_010087"/>
    </isoform>
    <isoform>
        <id>P24666-3</id>
        <name>3</name>
        <name>C</name>
        <name evidence="10">LMPTP-C</name>
        <sequence type="described" ref="VSP_010088"/>
    </isoform>
    <isoform>
        <id>P24666-4</id>
        <name>4</name>
        <sequence type="described" ref="VSP_054074 VSP_054075"/>
    </isoform>
    <text>The ratio of isoform 1 to isoform 2 is 2:1 in allele A, 4:1 in allele B and 1:4 in allele C.</text>
</comment>
<comment type="tissue specificity">
    <molecule>Isoform 2</molecule>
    <text evidence="7">Expressed in T-lymphocytes.</text>
</comment>
<comment type="PTM">
    <molecule>Isoform 2</molecule>
    <text evidence="2 7">Phosphorylated by LCK (PubMed:10336608, PubMed:9038134). Phosphorylation at Tyr-132 increases its phosphatase activity (PubMed:9038134).</text>
</comment>
<comment type="PTM">
    <molecule>Isoform 3</molecule>
    <text evidence="2">Not phosphorylated.</text>
</comment>
<comment type="polymorphism">
    <text evidence="6">ACP1 is genetically polymorphic. Three common alleles are known in Caucasians: ACP1*A, ACP1*B and ACP1*C. They give rise to six different phenotypes. Each allele appears to encode two electrophoretically different isozymes, F and S, which are produced in allele-specific ratios (PubMed:1939112). The sequence shown is that of allele ACP1*B and allele ACP1*C.</text>
</comment>
<comment type="similarity">
    <text evidence="18">Belongs to the low molecular weight phosphotyrosine protein phosphatase family.</text>
</comment>
<accession>P24666</accession>
<accession>A8K1L9</accession>
<accession>B5MCC7</accession>
<accession>P24667</accession>
<accession>Q16035</accession>
<accession>Q16036</accession>
<accession>Q16725</accession>
<accession>Q3KQX8</accession>
<accession>Q53RU0</accession>
<organism>
    <name type="scientific">Homo sapiens</name>
    <name type="common">Human</name>
    <dbReference type="NCBI Taxonomy" id="9606"/>
    <lineage>
        <taxon>Eukaryota</taxon>
        <taxon>Metazoa</taxon>
        <taxon>Chordata</taxon>
        <taxon>Craniata</taxon>
        <taxon>Vertebrata</taxon>
        <taxon>Euteleostomi</taxon>
        <taxon>Mammalia</taxon>
        <taxon>Eutheria</taxon>
        <taxon>Euarchontoglires</taxon>
        <taxon>Primates</taxon>
        <taxon>Haplorrhini</taxon>
        <taxon>Catarrhini</taxon>
        <taxon>Hominidae</taxon>
        <taxon>Homo</taxon>
    </lineage>
</organism>